<name>APT_VIBC3</name>
<dbReference type="EC" id="2.4.2.7" evidence="1"/>
<dbReference type="EMBL" id="CP000627">
    <property type="protein sequence ID" value="ABQ20077.1"/>
    <property type="molecule type" value="Genomic_DNA"/>
</dbReference>
<dbReference type="EMBL" id="CP001235">
    <property type="protein sequence ID" value="ACP09079.1"/>
    <property type="molecule type" value="Genomic_DNA"/>
</dbReference>
<dbReference type="RefSeq" id="WP_000206218.1">
    <property type="nucleotide sequence ID" value="NZ_JAACZH010000005.1"/>
</dbReference>
<dbReference type="SMR" id="A5F2N2"/>
<dbReference type="KEGG" id="vco:VC0395_A0571"/>
<dbReference type="KEGG" id="vcr:VC395_1067"/>
<dbReference type="PATRIC" id="fig|345073.21.peg.1035"/>
<dbReference type="eggNOG" id="COG0503">
    <property type="taxonomic scope" value="Bacteria"/>
</dbReference>
<dbReference type="HOGENOM" id="CLU_063339_3_0_6"/>
<dbReference type="OrthoDB" id="9803963at2"/>
<dbReference type="UniPathway" id="UPA00588">
    <property type="reaction ID" value="UER00646"/>
</dbReference>
<dbReference type="Proteomes" id="UP000000249">
    <property type="component" value="Chromosome 2"/>
</dbReference>
<dbReference type="GO" id="GO:0005737">
    <property type="term" value="C:cytoplasm"/>
    <property type="evidence" value="ECO:0007669"/>
    <property type="project" value="UniProtKB-SubCell"/>
</dbReference>
<dbReference type="GO" id="GO:0002055">
    <property type="term" value="F:adenine binding"/>
    <property type="evidence" value="ECO:0007669"/>
    <property type="project" value="TreeGrafter"/>
</dbReference>
<dbReference type="GO" id="GO:0003999">
    <property type="term" value="F:adenine phosphoribosyltransferase activity"/>
    <property type="evidence" value="ECO:0007669"/>
    <property type="project" value="UniProtKB-UniRule"/>
</dbReference>
<dbReference type="GO" id="GO:0016208">
    <property type="term" value="F:AMP binding"/>
    <property type="evidence" value="ECO:0007669"/>
    <property type="project" value="TreeGrafter"/>
</dbReference>
<dbReference type="GO" id="GO:0006168">
    <property type="term" value="P:adenine salvage"/>
    <property type="evidence" value="ECO:0007669"/>
    <property type="project" value="InterPro"/>
</dbReference>
<dbReference type="GO" id="GO:0044209">
    <property type="term" value="P:AMP salvage"/>
    <property type="evidence" value="ECO:0007669"/>
    <property type="project" value="UniProtKB-UniRule"/>
</dbReference>
<dbReference type="GO" id="GO:0006166">
    <property type="term" value="P:purine ribonucleoside salvage"/>
    <property type="evidence" value="ECO:0007669"/>
    <property type="project" value="UniProtKB-KW"/>
</dbReference>
<dbReference type="CDD" id="cd06223">
    <property type="entry name" value="PRTases_typeI"/>
    <property type="match status" value="1"/>
</dbReference>
<dbReference type="FunFam" id="3.40.50.2020:FF:000004">
    <property type="entry name" value="Adenine phosphoribosyltransferase"/>
    <property type="match status" value="1"/>
</dbReference>
<dbReference type="Gene3D" id="3.40.50.2020">
    <property type="match status" value="1"/>
</dbReference>
<dbReference type="HAMAP" id="MF_00004">
    <property type="entry name" value="Aden_phosphoribosyltr"/>
    <property type="match status" value="1"/>
</dbReference>
<dbReference type="InterPro" id="IPR005764">
    <property type="entry name" value="Ade_phspho_trans"/>
</dbReference>
<dbReference type="InterPro" id="IPR000836">
    <property type="entry name" value="PRibTrfase_dom"/>
</dbReference>
<dbReference type="InterPro" id="IPR029057">
    <property type="entry name" value="PRTase-like"/>
</dbReference>
<dbReference type="InterPro" id="IPR050054">
    <property type="entry name" value="UPRTase/APRTase"/>
</dbReference>
<dbReference type="NCBIfam" id="TIGR01090">
    <property type="entry name" value="apt"/>
    <property type="match status" value="1"/>
</dbReference>
<dbReference type="NCBIfam" id="NF002632">
    <property type="entry name" value="PRK02304.1-1"/>
    <property type="match status" value="1"/>
</dbReference>
<dbReference type="NCBIfam" id="NF002633">
    <property type="entry name" value="PRK02304.1-2"/>
    <property type="match status" value="1"/>
</dbReference>
<dbReference type="NCBIfam" id="NF002634">
    <property type="entry name" value="PRK02304.1-3"/>
    <property type="match status" value="1"/>
</dbReference>
<dbReference type="NCBIfam" id="NF002636">
    <property type="entry name" value="PRK02304.1-5"/>
    <property type="match status" value="1"/>
</dbReference>
<dbReference type="PANTHER" id="PTHR32315">
    <property type="entry name" value="ADENINE PHOSPHORIBOSYLTRANSFERASE"/>
    <property type="match status" value="1"/>
</dbReference>
<dbReference type="PANTHER" id="PTHR32315:SF3">
    <property type="entry name" value="ADENINE PHOSPHORIBOSYLTRANSFERASE"/>
    <property type="match status" value="1"/>
</dbReference>
<dbReference type="Pfam" id="PF00156">
    <property type="entry name" value="Pribosyltran"/>
    <property type="match status" value="1"/>
</dbReference>
<dbReference type="SUPFAM" id="SSF53271">
    <property type="entry name" value="PRTase-like"/>
    <property type="match status" value="1"/>
</dbReference>
<dbReference type="PROSITE" id="PS00103">
    <property type="entry name" value="PUR_PYR_PR_TRANSFER"/>
    <property type="match status" value="1"/>
</dbReference>
<protein>
    <recommendedName>
        <fullName evidence="1">Adenine phosphoribosyltransferase</fullName>
        <shortName evidence="1">APRT</shortName>
        <ecNumber evidence="1">2.4.2.7</ecNumber>
    </recommendedName>
</protein>
<feature type="chain" id="PRO_1000070912" description="Adenine phosphoribosyltransferase">
    <location>
        <begin position="1"/>
        <end position="181"/>
    </location>
</feature>
<sequence length="181" mass="19693">MTTETLSLIKSSIKSIPDYPKKGILFRDVTSLLEDAQAYQATIQLLVEKYKDMGFTKVVGTEARGFLFGAPLALELGVGFVPVRKPGKLPRQTVAQSYELEYGTDTLEIHVDAIKPGDKVLVVDDLLATGGTIEATTKLIRQLGGEVEHAAFVINLPEIGGDKRLEGLGLQVYSICEFEGH</sequence>
<comment type="function">
    <text evidence="1">Catalyzes a salvage reaction resulting in the formation of AMP, that is energically less costly than de novo synthesis.</text>
</comment>
<comment type="catalytic activity">
    <reaction evidence="1">
        <text>AMP + diphosphate = 5-phospho-alpha-D-ribose 1-diphosphate + adenine</text>
        <dbReference type="Rhea" id="RHEA:16609"/>
        <dbReference type="ChEBI" id="CHEBI:16708"/>
        <dbReference type="ChEBI" id="CHEBI:33019"/>
        <dbReference type="ChEBI" id="CHEBI:58017"/>
        <dbReference type="ChEBI" id="CHEBI:456215"/>
        <dbReference type="EC" id="2.4.2.7"/>
    </reaction>
</comment>
<comment type="pathway">
    <text evidence="1">Purine metabolism; AMP biosynthesis via salvage pathway; AMP from adenine: step 1/1.</text>
</comment>
<comment type="subunit">
    <text evidence="1">Homodimer.</text>
</comment>
<comment type="subcellular location">
    <subcellularLocation>
        <location evidence="1">Cytoplasm</location>
    </subcellularLocation>
</comment>
<comment type="similarity">
    <text evidence="1">Belongs to the purine/pyrimidine phosphoribosyltransferase family.</text>
</comment>
<organism>
    <name type="scientific">Vibrio cholerae serotype O1 (strain ATCC 39541 / Classical Ogawa 395 / O395)</name>
    <dbReference type="NCBI Taxonomy" id="345073"/>
    <lineage>
        <taxon>Bacteria</taxon>
        <taxon>Pseudomonadati</taxon>
        <taxon>Pseudomonadota</taxon>
        <taxon>Gammaproteobacteria</taxon>
        <taxon>Vibrionales</taxon>
        <taxon>Vibrionaceae</taxon>
        <taxon>Vibrio</taxon>
    </lineage>
</organism>
<accession>A5F2N2</accession>
<accession>C3LZ63</accession>
<evidence type="ECO:0000255" key="1">
    <source>
        <dbReference type="HAMAP-Rule" id="MF_00004"/>
    </source>
</evidence>
<gene>
    <name evidence="1" type="primary">apt</name>
    <name type="ordered locus">VC0395_A0571</name>
    <name type="ordered locus">VC395_1067</name>
</gene>
<reference key="1">
    <citation type="submission" date="2007-03" db="EMBL/GenBank/DDBJ databases">
        <authorList>
            <person name="Heidelberg J."/>
        </authorList>
    </citation>
    <scope>NUCLEOTIDE SEQUENCE [LARGE SCALE GENOMIC DNA]</scope>
    <source>
        <strain>ATCC 39541 / Classical Ogawa 395 / O395</strain>
    </source>
</reference>
<reference key="2">
    <citation type="journal article" date="2008" name="PLoS ONE">
        <title>A recalibrated molecular clock and independent origins for the cholera pandemic clones.</title>
        <authorList>
            <person name="Feng L."/>
            <person name="Reeves P.R."/>
            <person name="Lan R."/>
            <person name="Ren Y."/>
            <person name="Gao C."/>
            <person name="Zhou Z."/>
            <person name="Ren Y."/>
            <person name="Cheng J."/>
            <person name="Wang W."/>
            <person name="Wang J."/>
            <person name="Qian W."/>
            <person name="Li D."/>
            <person name="Wang L."/>
        </authorList>
    </citation>
    <scope>NUCLEOTIDE SEQUENCE [LARGE SCALE GENOMIC DNA]</scope>
    <source>
        <strain>ATCC 39541 / Classical Ogawa 395 / O395</strain>
    </source>
</reference>
<keyword id="KW-0963">Cytoplasm</keyword>
<keyword id="KW-0328">Glycosyltransferase</keyword>
<keyword id="KW-0660">Purine salvage</keyword>
<keyword id="KW-0808">Transferase</keyword>
<proteinExistence type="inferred from homology"/>